<accession>Q6L589</accession>
<accession>Q0DIR8</accession>
<protein>
    <recommendedName>
        <fullName evidence="6">NRR repressor homolog 1</fullName>
    </recommendedName>
</protein>
<comment type="function">
    <text evidence="3">Binds to and represses NPR1/NH1-mediated transcriptional activation of LG2 in vitro.</text>
</comment>
<comment type="subunit">
    <text evidence="3 4">Interacts with NPR1/NH1 (PubMed:22353606, PubMed:24919709). Interacts with NPR3/NH3 (PubMed:24919709).</text>
</comment>
<comment type="subcellular location">
    <subcellularLocation>
        <location evidence="1">Nucleus</location>
    </subcellularLocation>
</comment>
<comment type="similarity">
    <text>Belongs to the NPR1-interactor family.</text>
</comment>
<reference key="1">
    <citation type="journal article" date="2005" name="Mol. Genet. Genomics">
        <title>A fine physical map of the rice chromosome 5.</title>
        <authorList>
            <person name="Cheng C.-H."/>
            <person name="Chung M.C."/>
            <person name="Liu S.-M."/>
            <person name="Chen S.-K."/>
            <person name="Kao F.Y."/>
            <person name="Lin S.-J."/>
            <person name="Hsiao S.-H."/>
            <person name="Tseng I.C."/>
            <person name="Hsing Y.-I.C."/>
            <person name="Wu H.-P."/>
            <person name="Chen C.-S."/>
            <person name="Shaw J.-F."/>
            <person name="Wu J."/>
            <person name="Matsumoto T."/>
            <person name="Sasaki T."/>
            <person name="Chen H.-C."/>
            <person name="Chow T.-Y."/>
        </authorList>
    </citation>
    <scope>NUCLEOTIDE SEQUENCE [LARGE SCALE GENOMIC DNA]</scope>
    <source>
        <strain>cv. Nipponbare</strain>
    </source>
</reference>
<reference key="2">
    <citation type="journal article" date="2005" name="Nature">
        <title>The map-based sequence of the rice genome.</title>
        <authorList>
            <consortium name="International rice genome sequencing project (IRGSP)"/>
        </authorList>
    </citation>
    <scope>NUCLEOTIDE SEQUENCE [LARGE SCALE GENOMIC DNA]</scope>
    <source>
        <strain>cv. Nipponbare</strain>
    </source>
</reference>
<reference key="3">
    <citation type="journal article" date="2008" name="Nucleic Acids Res.">
        <title>The rice annotation project database (RAP-DB): 2008 update.</title>
        <authorList>
            <consortium name="The rice annotation project (RAP)"/>
        </authorList>
    </citation>
    <scope>GENOME REANNOTATION</scope>
    <source>
        <strain>cv. Nipponbare</strain>
    </source>
</reference>
<reference key="4">
    <citation type="journal article" date="2013" name="Rice">
        <title>Improvement of the Oryza sativa Nipponbare reference genome using next generation sequence and optical map data.</title>
        <authorList>
            <person name="Kawahara Y."/>
            <person name="de la Bastide M."/>
            <person name="Hamilton J.P."/>
            <person name="Kanamori H."/>
            <person name="McCombie W.R."/>
            <person name="Ouyang S."/>
            <person name="Schwartz D.C."/>
            <person name="Tanaka T."/>
            <person name="Wu J."/>
            <person name="Zhou S."/>
            <person name="Childs K.L."/>
            <person name="Davidson R.M."/>
            <person name="Lin H."/>
            <person name="Quesada-Ocampo L."/>
            <person name="Vaillancourt B."/>
            <person name="Sakai H."/>
            <person name="Lee S.S."/>
            <person name="Kim J."/>
            <person name="Numa H."/>
            <person name="Itoh T."/>
            <person name="Buell C.R."/>
            <person name="Matsumoto T."/>
        </authorList>
    </citation>
    <scope>GENOME REANNOTATION</scope>
    <source>
        <strain>cv. Nipponbare</strain>
    </source>
</reference>
<reference key="5">
    <citation type="journal article" date="2012" name="Plant Methods">
        <title>A rice transient assay system identifies a novel domain in NRR required for interaction with NH1/OsNPR1 and inhibition of NH1-mediated transcriptional activation.</title>
        <authorList>
            <person name="Chern M."/>
            <person name="Bai W."/>
            <person name="Sze-To W.H."/>
            <person name="Canlas P.E."/>
            <person name="Bartley L.E."/>
            <person name="Ronald P.C."/>
        </authorList>
    </citation>
    <scope>FUNCTION</scope>
    <scope>INTERACTION WITH NPR1/NH1</scope>
</reference>
<reference key="6">
    <citation type="journal article" date="2014" name="BMC Genomics">
        <title>Interaction specificity and coexpression of rice NPR1 homologs 1 and 3 (NH1 and NH3), TGA transcription factors and negative regulator of resistance (NRR) proteins.</title>
        <authorList>
            <person name="Chern M."/>
            <person name="Bai W."/>
            <person name="Ruan D."/>
            <person name="Oh T."/>
            <person name="Chen X."/>
            <person name="Ronald P.C."/>
        </authorList>
    </citation>
    <scope>INTERACTION WITH NPR1/NH1 AND NPR3/NH3</scope>
</reference>
<organism>
    <name type="scientific">Oryza sativa subsp. japonica</name>
    <name type="common">Rice</name>
    <dbReference type="NCBI Taxonomy" id="39947"/>
    <lineage>
        <taxon>Eukaryota</taxon>
        <taxon>Viridiplantae</taxon>
        <taxon>Streptophyta</taxon>
        <taxon>Embryophyta</taxon>
        <taxon>Tracheophyta</taxon>
        <taxon>Spermatophyta</taxon>
        <taxon>Magnoliopsida</taxon>
        <taxon>Liliopsida</taxon>
        <taxon>Poales</taxon>
        <taxon>Poaceae</taxon>
        <taxon>BOP clade</taxon>
        <taxon>Oryzoideae</taxon>
        <taxon>Oryzeae</taxon>
        <taxon>Oryzinae</taxon>
        <taxon>Oryza</taxon>
        <taxon>Oryza sativa</taxon>
    </lineage>
</organism>
<evidence type="ECO:0000250" key="1">
    <source>
        <dbReference type="UniProtKB" id="Q5ZEF1"/>
    </source>
</evidence>
<evidence type="ECO:0000256" key="2">
    <source>
        <dbReference type="SAM" id="MobiDB-lite"/>
    </source>
</evidence>
<evidence type="ECO:0000269" key="3">
    <source>
    </source>
</evidence>
<evidence type="ECO:0000269" key="4">
    <source>
    </source>
</evidence>
<evidence type="ECO:0000303" key="5">
    <source>
    </source>
</evidence>
<evidence type="ECO:0000305" key="6"/>
<evidence type="ECO:0000312" key="7">
    <source>
        <dbReference type="EMBL" id="AAT38018.1"/>
    </source>
</evidence>
<evidence type="ECO:0000312" key="8">
    <source>
        <dbReference type="EMBL" id="BAF17255.2"/>
    </source>
</evidence>
<name>NRH1_ORYSJ</name>
<keyword id="KW-0539">Nucleus</keyword>
<keyword id="KW-0611">Plant defense</keyword>
<keyword id="KW-1185">Reference proteome</keyword>
<feature type="chain" id="PRO_0000437009" description="NRR repressor homolog 1">
    <location>
        <begin position="1"/>
        <end position="183"/>
    </location>
</feature>
<feature type="region of interest" description="Disordered" evidence="2">
    <location>
        <begin position="1"/>
        <end position="40"/>
    </location>
</feature>
<feature type="region of interest" description="Disordered" evidence="2">
    <location>
        <begin position="66"/>
        <end position="183"/>
    </location>
</feature>
<feature type="compositionally biased region" description="Acidic residues" evidence="2">
    <location>
        <begin position="31"/>
        <end position="40"/>
    </location>
</feature>
<feature type="compositionally biased region" description="Gly residues" evidence="2">
    <location>
        <begin position="70"/>
        <end position="79"/>
    </location>
</feature>
<feature type="compositionally biased region" description="Acidic residues" evidence="2">
    <location>
        <begin position="101"/>
        <end position="115"/>
    </location>
</feature>
<feature type="compositionally biased region" description="Basic and acidic residues" evidence="2">
    <location>
        <begin position="135"/>
        <end position="145"/>
    </location>
</feature>
<feature type="compositionally biased region" description="Acidic residues" evidence="2">
    <location>
        <begin position="150"/>
        <end position="161"/>
    </location>
</feature>
<feature type="compositionally biased region" description="Basic and acidic residues" evidence="2">
    <location>
        <begin position="163"/>
        <end position="183"/>
    </location>
</feature>
<sequence>MEGVDVKAPRPGCGGDDGGAAAASLSARREEEEEGAVVGGEDEQVERFYALLANIRALRGMYSRYNGEEGAAGGDGDGASGRKRARRAEPPWRPAFRMEDFEFEEAAAGAGDDDAACSGRTTKKQRSGGGGHGAAVEKRRTEKEAAAAAAEDDDDEQEGGEVVEGKEEHRPGRRVEAHGPTDQ</sequence>
<gene>
    <name evidence="5" type="primary">RH1</name>
    <name evidence="8" type="ordered locus">Os05g0368000</name>
    <name evidence="6" type="ordered locus">LOC_Os05g30500</name>
    <name evidence="7" type="ORF">OJ1393_A07.9</name>
</gene>
<proteinExistence type="evidence at protein level"/>
<dbReference type="EMBL" id="AC104279">
    <property type="protein sequence ID" value="AAT38018.1"/>
    <property type="molecule type" value="Genomic_DNA"/>
</dbReference>
<dbReference type="EMBL" id="AP008211">
    <property type="protein sequence ID" value="BAF17255.2"/>
    <property type="molecule type" value="Genomic_DNA"/>
</dbReference>
<dbReference type="EMBL" id="AP014961">
    <property type="status" value="NOT_ANNOTATED_CDS"/>
    <property type="molecule type" value="Genomic_DNA"/>
</dbReference>
<dbReference type="RefSeq" id="XP_015638429.1">
    <property type="nucleotide sequence ID" value="XM_015782943.1"/>
</dbReference>
<dbReference type="SMR" id="Q6L589"/>
<dbReference type="STRING" id="39947.Q6L589"/>
<dbReference type="PaxDb" id="39947-Q6L589"/>
<dbReference type="KEGG" id="dosa:Os05g0368000"/>
<dbReference type="InParanoid" id="Q6L589"/>
<dbReference type="Proteomes" id="UP000000763">
    <property type="component" value="Chromosome 5"/>
</dbReference>
<dbReference type="Proteomes" id="UP000059680">
    <property type="component" value="Chromosome 5"/>
</dbReference>
<dbReference type="GO" id="GO:0005634">
    <property type="term" value="C:nucleus"/>
    <property type="evidence" value="ECO:0007669"/>
    <property type="project" value="UniProtKB-SubCell"/>
</dbReference>
<dbReference type="GO" id="GO:0006952">
    <property type="term" value="P:defense response"/>
    <property type="evidence" value="ECO:0007669"/>
    <property type="project" value="UniProtKB-KW"/>
</dbReference>
<dbReference type="GO" id="GO:0010112">
    <property type="term" value="P:regulation of systemic acquired resistance"/>
    <property type="evidence" value="ECO:0007669"/>
    <property type="project" value="InterPro"/>
</dbReference>
<dbReference type="InterPro" id="IPR031425">
    <property type="entry name" value="NPR1/NH1-interacting"/>
</dbReference>
<dbReference type="PANTHER" id="PTHR33669:SF4">
    <property type="entry name" value="NRR REPRESSOR HOMOLOG 2"/>
    <property type="match status" value="1"/>
</dbReference>
<dbReference type="PANTHER" id="PTHR33669">
    <property type="entry name" value="PROTEIN NEGATIVE REGULATOR OF RESISTANCE"/>
    <property type="match status" value="1"/>
</dbReference>
<dbReference type="Pfam" id="PF15699">
    <property type="entry name" value="NPR1_interact"/>
    <property type="match status" value="1"/>
</dbReference>